<gene>
    <name evidence="1" type="primary">ybeY</name>
    <name type="ordered locus">Cag_1173</name>
</gene>
<protein>
    <recommendedName>
        <fullName evidence="1">Endoribonuclease YbeY</fullName>
        <ecNumber evidence="1">3.1.-.-</ecNumber>
    </recommendedName>
</protein>
<dbReference type="EC" id="3.1.-.-" evidence="1"/>
<dbReference type="EMBL" id="CP000108">
    <property type="protein sequence ID" value="ABB28435.1"/>
    <property type="molecule type" value="Genomic_DNA"/>
</dbReference>
<dbReference type="SMR" id="Q3ARE0"/>
<dbReference type="STRING" id="340177.Cag_1173"/>
<dbReference type="KEGG" id="cch:Cag_1173"/>
<dbReference type="eggNOG" id="COG0319">
    <property type="taxonomic scope" value="Bacteria"/>
</dbReference>
<dbReference type="HOGENOM" id="CLU_106710_3_3_10"/>
<dbReference type="OrthoDB" id="9811984at2"/>
<dbReference type="GO" id="GO:0005737">
    <property type="term" value="C:cytoplasm"/>
    <property type="evidence" value="ECO:0007669"/>
    <property type="project" value="UniProtKB-SubCell"/>
</dbReference>
<dbReference type="GO" id="GO:0004222">
    <property type="term" value="F:metalloendopeptidase activity"/>
    <property type="evidence" value="ECO:0007669"/>
    <property type="project" value="InterPro"/>
</dbReference>
<dbReference type="GO" id="GO:0004521">
    <property type="term" value="F:RNA endonuclease activity"/>
    <property type="evidence" value="ECO:0007669"/>
    <property type="project" value="UniProtKB-UniRule"/>
</dbReference>
<dbReference type="GO" id="GO:0008270">
    <property type="term" value="F:zinc ion binding"/>
    <property type="evidence" value="ECO:0007669"/>
    <property type="project" value="UniProtKB-UniRule"/>
</dbReference>
<dbReference type="GO" id="GO:0006364">
    <property type="term" value="P:rRNA processing"/>
    <property type="evidence" value="ECO:0007669"/>
    <property type="project" value="UniProtKB-UniRule"/>
</dbReference>
<dbReference type="Gene3D" id="3.40.390.30">
    <property type="entry name" value="Metalloproteases ('zincins'), catalytic domain"/>
    <property type="match status" value="1"/>
</dbReference>
<dbReference type="HAMAP" id="MF_00009">
    <property type="entry name" value="Endoribonucl_YbeY"/>
    <property type="match status" value="1"/>
</dbReference>
<dbReference type="InterPro" id="IPR023091">
    <property type="entry name" value="MetalPrtase_cat_dom_sf_prd"/>
</dbReference>
<dbReference type="InterPro" id="IPR002036">
    <property type="entry name" value="YbeY"/>
</dbReference>
<dbReference type="NCBIfam" id="TIGR00043">
    <property type="entry name" value="rRNA maturation RNase YbeY"/>
    <property type="match status" value="1"/>
</dbReference>
<dbReference type="Pfam" id="PF02130">
    <property type="entry name" value="YbeY"/>
    <property type="match status" value="1"/>
</dbReference>
<dbReference type="SUPFAM" id="SSF55486">
    <property type="entry name" value="Metalloproteases ('zincins'), catalytic domain"/>
    <property type="match status" value="1"/>
</dbReference>
<proteinExistence type="inferred from homology"/>
<accession>Q3ARE0</accession>
<evidence type="ECO:0000255" key="1">
    <source>
        <dbReference type="HAMAP-Rule" id="MF_00009"/>
    </source>
</evidence>
<reference key="1">
    <citation type="submission" date="2005-08" db="EMBL/GenBank/DDBJ databases">
        <title>Complete sequence of Chlorobium chlorochromatii CaD3.</title>
        <authorList>
            <consortium name="US DOE Joint Genome Institute"/>
            <person name="Copeland A."/>
            <person name="Lucas S."/>
            <person name="Lapidus A."/>
            <person name="Barry K."/>
            <person name="Detter J.C."/>
            <person name="Glavina T."/>
            <person name="Hammon N."/>
            <person name="Israni S."/>
            <person name="Pitluck S."/>
            <person name="Bryant D."/>
            <person name="Schmutz J."/>
            <person name="Larimer F."/>
            <person name="Land M."/>
            <person name="Kyrpides N."/>
            <person name="Ivanova N."/>
            <person name="Richardson P."/>
        </authorList>
    </citation>
    <scope>NUCLEOTIDE SEQUENCE [LARGE SCALE GENOMIC DNA]</scope>
    <source>
        <strain>CaD3</strain>
    </source>
</reference>
<organism>
    <name type="scientific">Chlorobium chlorochromatii (strain CaD3)</name>
    <dbReference type="NCBI Taxonomy" id="340177"/>
    <lineage>
        <taxon>Bacteria</taxon>
        <taxon>Pseudomonadati</taxon>
        <taxon>Chlorobiota</taxon>
        <taxon>Chlorobiia</taxon>
        <taxon>Chlorobiales</taxon>
        <taxon>Chlorobiaceae</taxon>
        <taxon>Chlorobium/Pelodictyon group</taxon>
        <taxon>Chlorobium</taxon>
    </lineage>
</organism>
<feature type="chain" id="PRO_0000284185" description="Endoribonuclease YbeY">
    <location>
        <begin position="1"/>
        <end position="156"/>
    </location>
</feature>
<feature type="binding site" evidence="1">
    <location>
        <position position="105"/>
    </location>
    <ligand>
        <name>Zn(2+)</name>
        <dbReference type="ChEBI" id="CHEBI:29105"/>
        <note>catalytic</note>
    </ligand>
</feature>
<feature type="binding site" evidence="1">
    <location>
        <position position="109"/>
    </location>
    <ligand>
        <name>Zn(2+)</name>
        <dbReference type="ChEBI" id="CHEBI:29105"/>
        <note>catalytic</note>
    </ligand>
</feature>
<feature type="binding site" evidence="1">
    <location>
        <position position="115"/>
    </location>
    <ligand>
        <name>Zn(2+)</name>
        <dbReference type="ChEBI" id="CHEBI:29105"/>
        <note>catalytic</note>
    </ligand>
</feature>
<name>YBEY_CHLCH</name>
<sequence>MSLELCNSTRQAIPNKRLLQAIRMVVQGEGYEIATITGVYCGNRMSQRINRDYLNHDYPTDTITFCYSEGKAIEGEFYISLDVIRCNARHFNVTFEEELLRVTIHSALHLTGMNDYLPEERVAMQAKEDYYLQLLKTQKSISPQKSTDNAIFSCNS</sequence>
<keyword id="KW-0963">Cytoplasm</keyword>
<keyword id="KW-0255">Endonuclease</keyword>
<keyword id="KW-0378">Hydrolase</keyword>
<keyword id="KW-0479">Metal-binding</keyword>
<keyword id="KW-0540">Nuclease</keyword>
<keyword id="KW-0690">Ribosome biogenesis</keyword>
<keyword id="KW-0698">rRNA processing</keyword>
<keyword id="KW-0862">Zinc</keyword>
<comment type="function">
    <text evidence="1">Single strand-specific metallo-endoribonuclease involved in late-stage 70S ribosome quality control and in maturation of the 3' terminus of the 16S rRNA.</text>
</comment>
<comment type="cofactor">
    <cofactor evidence="1">
        <name>Zn(2+)</name>
        <dbReference type="ChEBI" id="CHEBI:29105"/>
    </cofactor>
    <text evidence="1">Binds 1 zinc ion.</text>
</comment>
<comment type="subcellular location">
    <subcellularLocation>
        <location evidence="1">Cytoplasm</location>
    </subcellularLocation>
</comment>
<comment type="similarity">
    <text evidence="1">Belongs to the endoribonuclease YbeY family.</text>
</comment>